<name>GLYA_LEGPH</name>
<proteinExistence type="inferred from homology"/>
<gene>
    <name evidence="1" type="primary">glyA</name>
    <name type="ordered locus">lpg0725</name>
</gene>
<accession>Q5ZXK6</accession>
<feature type="chain" id="PRO_0000113594" description="Serine hydroxymethyltransferase">
    <location>
        <begin position="1"/>
        <end position="417"/>
    </location>
</feature>
<feature type="binding site" evidence="1">
    <location>
        <position position="121"/>
    </location>
    <ligand>
        <name>(6S)-5,6,7,8-tetrahydrofolate</name>
        <dbReference type="ChEBI" id="CHEBI:57453"/>
    </ligand>
</feature>
<feature type="binding site" evidence="1">
    <location>
        <begin position="125"/>
        <end position="127"/>
    </location>
    <ligand>
        <name>(6S)-5,6,7,8-tetrahydrofolate</name>
        <dbReference type="ChEBI" id="CHEBI:57453"/>
    </ligand>
</feature>
<feature type="binding site" evidence="1">
    <location>
        <begin position="355"/>
        <end position="357"/>
    </location>
    <ligand>
        <name>(6S)-5,6,7,8-tetrahydrofolate</name>
        <dbReference type="ChEBI" id="CHEBI:57453"/>
    </ligand>
</feature>
<feature type="site" description="Plays an important role in substrate specificity" evidence="1">
    <location>
        <position position="229"/>
    </location>
</feature>
<feature type="modified residue" description="N6-(pyridoxal phosphate)lysine" evidence="1">
    <location>
        <position position="230"/>
    </location>
</feature>
<protein>
    <recommendedName>
        <fullName evidence="1">Serine hydroxymethyltransferase</fullName>
        <shortName evidence="1">SHMT</shortName>
        <shortName evidence="1">Serine methylase</shortName>
        <ecNumber evidence="1">2.1.2.1</ecNumber>
    </recommendedName>
</protein>
<organism>
    <name type="scientific">Legionella pneumophila subsp. pneumophila (strain Philadelphia 1 / ATCC 33152 / DSM 7513)</name>
    <dbReference type="NCBI Taxonomy" id="272624"/>
    <lineage>
        <taxon>Bacteria</taxon>
        <taxon>Pseudomonadati</taxon>
        <taxon>Pseudomonadota</taxon>
        <taxon>Gammaproteobacteria</taxon>
        <taxon>Legionellales</taxon>
        <taxon>Legionellaceae</taxon>
        <taxon>Legionella</taxon>
    </lineage>
</organism>
<dbReference type="EC" id="2.1.2.1" evidence="1"/>
<dbReference type="EMBL" id="AE017354">
    <property type="protein sequence ID" value="AAU26814.1"/>
    <property type="molecule type" value="Genomic_DNA"/>
</dbReference>
<dbReference type="RefSeq" id="WP_010946462.1">
    <property type="nucleotide sequence ID" value="NC_002942.5"/>
</dbReference>
<dbReference type="RefSeq" id="YP_094761.1">
    <property type="nucleotide sequence ID" value="NC_002942.5"/>
</dbReference>
<dbReference type="SMR" id="Q5ZXK6"/>
<dbReference type="STRING" id="272624.lpg0725"/>
<dbReference type="PaxDb" id="272624-lpg0725"/>
<dbReference type="GeneID" id="57034718"/>
<dbReference type="KEGG" id="lpn:lpg0725"/>
<dbReference type="PATRIC" id="fig|272624.6.peg.747"/>
<dbReference type="eggNOG" id="COG0112">
    <property type="taxonomic scope" value="Bacteria"/>
</dbReference>
<dbReference type="HOGENOM" id="CLU_022477_2_1_6"/>
<dbReference type="OrthoDB" id="9803846at2"/>
<dbReference type="UniPathway" id="UPA00193"/>
<dbReference type="UniPathway" id="UPA00288">
    <property type="reaction ID" value="UER01023"/>
</dbReference>
<dbReference type="Proteomes" id="UP000000609">
    <property type="component" value="Chromosome"/>
</dbReference>
<dbReference type="GO" id="GO:0005829">
    <property type="term" value="C:cytosol"/>
    <property type="evidence" value="ECO:0007669"/>
    <property type="project" value="TreeGrafter"/>
</dbReference>
<dbReference type="GO" id="GO:0004372">
    <property type="term" value="F:glycine hydroxymethyltransferase activity"/>
    <property type="evidence" value="ECO:0007669"/>
    <property type="project" value="UniProtKB-UniRule"/>
</dbReference>
<dbReference type="GO" id="GO:0030170">
    <property type="term" value="F:pyridoxal phosphate binding"/>
    <property type="evidence" value="ECO:0007669"/>
    <property type="project" value="UniProtKB-UniRule"/>
</dbReference>
<dbReference type="GO" id="GO:0019264">
    <property type="term" value="P:glycine biosynthetic process from serine"/>
    <property type="evidence" value="ECO:0007669"/>
    <property type="project" value="UniProtKB-UniRule"/>
</dbReference>
<dbReference type="GO" id="GO:0035999">
    <property type="term" value="P:tetrahydrofolate interconversion"/>
    <property type="evidence" value="ECO:0007669"/>
    <property type="project" value="UniProtKB-UniRule"/>
</dbReference>
<dbReference type="CDD" id="cd00378">
    <property type="entry name" value="SHMT"/>
    <property type="match status" value="1"/>
</dbReference>
<dbReference type="FunFam" id="3.40.640.10:FF:000001">
    <property type="entry name" value="Serine hydroxymethyltransferase"/>
    <property type="match status" value="1"/>
</dbReference>
<dbReference type="FunFam" id="3.90.1150.10:FF:000003">
    <property type="entry name" value="Serine hydroxymethyltransferase"/>
    <property type="match status" value="1"/>
</dbReference>
<dbReference type="Gene3D" id="3.90.1150.10">
    <property type="entry name" value="Aspartate Aminotransferase, domain 1"/>
    <property type="match status" value="1"/>
</dbReference>
<dbReference type="Gene3D" id="3.40.640.10">
    <property type="entry name" value="Type I PLP-dependent aspartate aminotransferase-like (Major domain)"/>
    <property type="match status" value="1"/>
</dbReference>
<dbReference type="HAMAP" id="MF_00051">
    <property type="entry name" value="SHMT"/>
    <property type="match status" value="1"/>
</dbReference>
<dbReference type="InterPro" id="IPR015424">
    <property type="entry name" value="PyrdxlP-dep_Trfase"/>
</dbReference>
<dbReference type="InterPro" id="IPR015421">
    <property type="entry name" value="PyrdxlP-dep_Trfase_major"/>
</dbReference>
<dbReference type="InterPro" id="IPR015422">
    <property type="entry name" value="PyrdxlP-dep_Trfase_small"/>
</dbReference>
<dbReference type="InterPro" id="IPR001085">
    <property type="entry name" value="Ser_HO-MeTrfase"/>
</dbReference>
<dbReference type="InterPro" id="IPR049943">
    <property type="entry name" value="Ser_HO-MeTrfase-like"/>
</dbReference>
<dbReference type="InterPro" id="IPR019798">
    <property type="entry name" value="Ser_HO-MeTrfase_PLP_BS"/>
</dbReference>
<dbReference type="InterPro" id="IPR039429">
    <property type="entry name" value="SHMT-like_dom"/>
</dbReference>
<dbReference type="NCBIfam" id="NF000586">
    <property type="entry name" value="PRK00011.1"/>
    <property type="match status" value="1"/>
</dbReference>
<dbReference type="PANTHER" id="PTHR11680">
    <property type="entry name" value="SERINE HYDROXYMETHYLTRANSFERASE"/>
    <property type="match status" value="1"/>
</dbReference>
<dbReference type="PANTHER" id="PTHR11680:SF50">
    <property type="entry name" value="SERINE HYDROXYMETHYLTRANSFERASE"/>
    <property type="match status" value="1"/>
</dbReference>
<dbReference type="Pfam" id="PF00464">
    <property type="entry name" value="SHMT"/>
    <property type="match status" value="1"/>
</dbReference>
<dbReference type="PIRSF" id="PIRSF000412">
    <property type="entry name" value="SHMT"/>
    <property type="match status" value="1"/>
</dbReference>
<dbReference type="SUPFAM" id="SSF53383">
    <property type="entry name" value="PLP-dependent transferases"/>
    <property type="match status" value="1"/>
</dbReference>
<dbReference type="PROSITE" id="PS00096">
    <property type="entry name" value="SHMT"/>
    <property type="match status" value="1"/>
</dbReference>
<comment type="function">
    <text evidence="1">Catalyzes the reversible interconversion of serine and glycine with tetrahydrofolate (THF) serving as the one-carbon carrier. This reaction serves as the major source of one-carbon groups required for the biosynthesis of purines, thymidylate, methionine, and other important biomolecules. Also exhibits THF-independent aldolase activity toward beta-hydroxyamino acids, producing glycine and aldehydes, via a retro-aldol mechanism.</text>
</comment>
<comment type="catalytic activity">
    <reaction evidence="1">
        <text>(6R)-5,10-methylene-5,6,7,8-tetrahydrofolate + glycine + H2O = (6S)-5,6,7,8-tetrahydrofolate + L-serine</text>
        <dbReference type="Rhea" id="RHEA:15481"/>
        <dbReference type="ChEBI" id="CHEBI:15377"/>
        <dbReference type="ChEBI" id="CHEBI:15636"/>
        <dbReference type="ChEBI" id="CHEBI:33384"/>
        <dbReference type="ChEBI" id="CHEBI:57305"/>
        <dbReference type="ChEBI" id="CHEBI:57453"/>
        <dbReference type="EC" id="2.1.2.1"/>
    </reaction>
</comment>
<comment type="cofactor">
    <cofactor evidence="1">
        <name>pyridoxal 5'-phosphate</name>
        <dbReference type="ChEBI" id="CHEBI:597326"/>
    </cofactor>
</comment>
<comment type="pathway">
    <text evidence="1">One-carbon metabolism; tetrahydrofolate interconversion.</text>
</comment>
<comment type="pathway">
    <text evidence="1">Amino-acid biosynthesis; glycine biosynthesis; glycine from L-serine: step 1/1.</text>
</comment>
<comment type="subunit">
    <text evidence="1">Homodimer.</text>
</comment>
<comment type="subcellular location">
    <subcellularLocation>
        <location evidence="1">Cytoplasm</location>
    </subcellularLocation>
</comment>
<comment type="similarity">
    <text evidence="1">Belongs to the SHMT family.</text>
</comment>
<reference key="1">
    <citation type="journal article" date="2004" name="Science">
        <title>The genomic sequence of the accidental pathogen Legionella pneumophila.</title>
        <authorList>
            <person name="Chien M."/>
            <person name="Morozova I."/>
            <person name="Shi S."/>
            <person name="Sheng H."/>
            <person name="Chen J."/>
            <person name="Gomez S.M."/>
            <person name="Asamani G."/>
            <person name="Hill K."/>
            <person name="Nuara J."/>
            <person name="Feder M."/>
            <person name="Rineer J."/>
            <person name="Greenberg J.J."/>
            <person name="Steshenko V."/>
            <person name="Park S.H."/>
            <person name="Zhao B."/>
            <person name="Teplitskaya E."/>
            <person name="Edwards J.R."/>
            <person name="Pampou S."/>
            <person name="Georghiou A."/>
            <person name="Chou I.-C."/>
            <person name="Iannuccilli W."/>
            <person name="Ulz M.E."/>
            <person name="Kim D.H."/>
            <person name="Geringer-Sameth A."/>
            <person name="Goldsberry C."/>
            <person name="Morozov P."/>
            <person name="Fischer S.G."/>
            <person name="Segal G."/>
            <person name="Qu X."/>
            <person name="Rzhetsky A."/>
            <person name="Zhang P."/>
            <person name="Cayanis E."/>
            <person name="De Jong P.J."/>
            <person name="Ju J."/>
            <person name="Kalachikov S."/>
            <person name="Shuman H.A."/>
            <person name="Russo J.J."/>
        </authorList>
    </citation>
    <scope>NUCLEOTIDE SEQUENCE [LARGE SCALE GENOMIC DNA]</scope>
    <source>
        <strain>Philadelphia 1 / ATCC 33152 / DSM 7513</strain>
    </source>
</reference>
<keyword id="KW-0028">Amino-acid biosynthesis</keyword>
<keyword id="KW-0963">Cytoplasm</keyword>
<keyword id="KW-0554">One-carbon metabolism</keyword>
<keyword id="KW-0663">Pyridoxal phosphate</keyword>
<keyword id="KW-1185">Reference proteome</keyword>
<keyword id="KW-0808">Transferase</keyword>
<sequence length="417" mass="45547">MFDESYSIKNFDDVLFKAISDEKRRQEEHIELIASENYVSPRVLEAQGSVLTNKYAEGYPGKRYYGGCEFVDVAEELAISRAKLLFGAHYVNVQPHSGSQANAAVMMALLSPGDTFMGMALPHGGHLTHGSKVNFSGKLYHSVEYGVDSNTGLIDYDALEKLALQHKPKLIIAGFSAYSRILDWARFREIADKVGAYLMADIAHVAGLVAVGLYPSPVPYADVVTTTTHKTLRGPRGGLILCKENEEIEKKLNSSVFPGMQGGPLMHVIAAKAVAFAEALLPEFKTYQQQVLANARTMCSVLQSRGYDIVSGGTDNHLLLVDLINKGITGKEADAAVGRANITVNKNSVPNDPRSPFVTSGLRLGTPAATTRGFKEREITLLSNWVADVLDNVHDETNISRVKTQVLLLCREFPVYA</sequence>
<evidence type="ECO:0000255" key="1">
    <source>
        <dbReference type="HAMAP-Rule" id="MF_00051"/>
    </source>
</evidence>